<dbReference type="EC" id="3.5.4.25" evidence="1"/>
<dbReference type="EMBL" id="AE000511">
    <property type="protein sequence ID" value="AAD07851.1"/>
    <property type="molecule type" value="Genomic_DNA"/>
</dbReference>
<dbReference type="EMBL" id="Y12062">
    <property type="protein sequence ID" value="CAA72785.1"/>
    <property type="molecule type" value="Genomic_DNA"/>
</dbReference>
<dbReference type="PIR" id="B64620">
    <property type="entry name" value="B64620"/>
</dbReference>
<dbReference type="RefSeq" id="NP_207595.1">
    <property type="nucleotide sequence ID" value="NC_000915.1"/>
</dbReference>
<dbReference type="RefSeq" id="WP_000825074.1">
    <property type="nucleotide sequence ID" value="NC_018939.1"/>
</dbReference>
<dbReference type="PDB" id="4RL4">
    <property type="method" value="X-ray"/>
    <property type="resolution" value="2.20 A"/>
    <property type="chains" value="A/B=1-192"/>
</dbReference>
<dbReference type="PDBsum" id="4RL4"/>
<dbReference type="SMR" id="O08315"/>
<dbReference type="DIP" id="DIP-3449N"/>
<dbReference type="FunCoup" id="O08315">
    <property type="interactions" value="92"/>
</dbReference>
<dbReference type="IntAct" id="O08315">
    <property type="interactions" value="1"/>
</dbReference>
<dbReference type="MINT" id="O08315"/>
<dbReference type="STRING" id="85962.HP_0802"/>
<dbReference type="PaxDb" id="85962-C694_04110"/>
<dbReference type="EnsemblBacteria" id="AAD07851">
    <property type="protein sequence ID" value="AAD07851"/>
    <property type="gene ID" value="HP_0802"/>
</dbReference>
<dbReference type="KEGG" id="heo:C694_04110"/>
<dbReference type="KEGG" id="hpy:HP_0802"/>
<dbReference type="PATRIC" id="fig|85962.47.peg.854"/>
<dbReference type="eggNOG" id="COG0807">
    <property type="taxonomic scope" value="Bacteria"/>
</dbReference>
<dbReference type="InParanoid" id="O08315"/>
<dbReference type="OrthoDB" id="9793111at2"/>
<dbReference type="PhylomeDB" id="O08315"/>
<dbReference type="BRENDA" id="3.5.4.25">
    <property type="organism ID" value="2604"/>
</dbReference>
<dbReference type="UniPathway" id="UPA00275">
    <property type="reaction ID" value="UER00400"/>
</dbReference>
<dbReference type="EvolutionaryTrace" id="O08315"/>
<dbReference type="Proteomes" id="UP000000429">
    <property type="component" value="Chromosome"/>
</dbReference>
<dbReference type="GO" id="GO:0005829">
    <property type="term" value="C:cytosol"/>
    <property type="evidence" value="ECO:0000318"/>
    <property type="project" value="GO_Central"/>
</dbReference>
<dbReference type="GO" id="GO:0005525">
    <property type="term" value="F:GTP binding"/>
    <property type="evidence" value="ECO:0007669"/>
    <property type="project" value="UniProtKB-KW"/>
</dbReference>
<dbReference type="GO" id="GO:0003935">
    <property type="term" value="F:GTP cyclohydrolase II activity"/>
    <property type="evidence" value="ECO:0000318"/>
    <property type="project" value="GO_Central"/>
</dbReference>
<dbReference type="GO" id="GO:0008270">
    <property type="term" value="F:zinc ion binding"/>
    <property type="evidence" value="ECO:0007669"/>
    <property type="project" value="UniProtKB-UniRule"/>
</dbReference>
<dbReference type="GO" id="GO:0009231">
    <property type="term" value="P:riboflavin biosynthetic process"/>
    <property type="evidence" value="ECO:0000318"/>
    <property type="project" value="GO_Central"/>
</dbReference>
<dbReference type="CDD" id="cd00641">
    <property type="entry name" value="GTP_cyclohydro2"/>
    <property type="match status" value="1"/>
</dbReference>
<dbReference type="FunFam" id="3.40.50.10990:FF:000001">
    <property type="entry name" value="Riboflavin biosynthesis protein RibBA"/>
    <property type="match status" value="1"/>
</dbReference>
<dbReference type="Gene3D" id="3.40.50.10990">
    <property type="entry name" value="GTP cyclohydrolase II"/>
    <property type="match status" value="1"/>
</dbReference>
<dbReference type="HAMAP" id="MF_00179">
    <property type="entry name" value="RibA"/>
    <property type="match status" value="1"/>
</dbReference>
<dbReference type="InterPro" id="IPR032677">
    <property type="entry name" value="GTP_cyclohydro_II"/>
</dbReference>
<dbReference type="InterPro" id="IPR000926">
    <property type="entry name" value="RibA"/>
</dbReference>
<dbReference type="InterPro" id="IPR036144">
    <property type="entry name" value="RibA-like_sf"/>
</dbReference>
<dbReference type="NCBIfam" id="NF001591">
    <property type="entry name" value="PRK00393.1"/>
    <property type="match status" value="1"/>
</dbReference>
<dbReference type="NCBIfam" id="TIGR00505">
    <property type="entry name" value="ribA"/>
    <property type="match status" value="1"/>
</dbReference>
<dbReference type="PANTHER" id="PTHR21327:SF18">
    <property type="entry name" value="3,4-DIHYDROXY-2-BUTANONE 4-PHOSPHATE SYNTHASE"/>
    <property type="match status" value="1"/>
</dbReference>
<dbReference type="PANTHER" id="PTHR21327">
    <property type="entry name" value="GTP CYCLOHYDROLASE II-RELATED"/>
    <property type="match status" value="1"/>
</dbReference>
<dbReference type="Pfam" id="PF00925">
    <property type="entry name" value="GTP_cyclohydro2"/>
    <property type="match status" value="1"/>
</dbReference>
<dbReference type="SUPFAM" id="SSF142695">
    <property type="entry name" value="RibA-like"/>
    <property type="match status" value="1"/>
</dbReference>
<evidence type="ECO:0000255" key="1">
    <source>
        <dbReference type="HAMAP-Rule" id="MF_00179"/>
    </source>
</evidence>
<evidence type="ECO:0000305" key="2"/>
<evidence type="ECO:0000305" key="3">
    <source>
    </source>
</evidence>
<evidence type="ECO:0007829" key="4">
    <source>
        <dbReference type="PDB" id="4RL4"/>
    </source>
</evidence>
<accession>O08315</accession>
<feature type="chain" id="PRO_0000151761" description="GTP cyclohydrolase-2">
    <location>
        <begin position="1"/>
        <end position="192"/>
    </location>
</feature>
<feature type="active site" description="Proton acceptor" evidence="1">
    <location>
        <position position="126"/>
    </location>
</feature>
<feature type="active site" description="Nucleophile" evidence="1">
    <location>
        <position position="128"/>
    </location>
</feature>
<feature type="binding site" evidence="1">
    <location>
        <begin position="50"/>
        <end position="54"/>
    </location>
    <ligand>
        <name>GTP</name>
        <dbReference type="ChEBI" id="CHEBI:37565"/>
    </ligand>
</feature>
<feature type="binding site" evidence="1">
    <location>
        <position position="55"/>
    </location>
    <ligand>
        <name>Zn(2+)</name>
        <dbReference type="ChEBI" id="CHEBI:29105"/>
        <note>catalytic</note>
    </ligand>
</feature>
<feature type="binding site" evidence="1">
    <location>
        <position position="66"/>
    </location>
    <ligand>
        <name>Zn(2+)</name>
        <dbReference type="ChEBI" id="CHEBI:29105"/>
        <note>catalytic</note>
    </ligand>
</feature>
<feature type="binding site" evidence="1">
    <location>
        <position position="68"/>
    </location>
    <ligand>
        <name>Zn(2+)</name>
        <dbReference type="ChEBI" id="CHEBI:29105"/>
        <note>catalytic</note>
    </ligand>
</feature>
<feature type="binding site" evidence="1">
    <location>
        <begin position="92"/>
        <end position="94"/>
    </location>
    <ligand>
        <name>GTP</name>
        <dbReference type="ChEBI" id="CHEBI:37565"/>
    </ligand>
</feature>
<feature type="binding site" evidence="1">
    <location>
        <position position="114"/>
    </location>
    <ligand>
        <name>GTP</name>
        <dbReference type="ChEBI" id="CHEBI:37565"/>
    </ligand>
</feature>
<feature type="binding site" evidence="1">
    <location>
        <position position="149"/>
    </location>
    <ligand>
        <name>GTP</name>
        <dbReference type="ChEBI" id="CHEBI:37565"/>
    </ligand>
</feature>
<feature type="binding site" evidence="1">
    <location>
        <position position="154"/>
    </location>
    <ligand>
        <name>GTP</name>
        <dbReference type="ChEBI" id="CHEBI:37565"/>
    </ligand>
</feature>
<feature type="sequence conflict" description="In Ref. 2; CAA72785." evidence="2" ref="2">
    <original>V</original>
    <variation>I</variation>
    <location>
        <position position="38"/>
    </location>
</feature>
<feature type="sequence conflict" description="In Ref. 2; CAA72785." evidence="2" ref="2">
    <original>S</original>
    <variation>P</variation>
    <location>
        <position position="44"/>
    </location>
</feature>
<feature type="sequence conflict" description="In Ref. 2; CAA72785." evidence="2" ref="2">
    <original>L</original>
    <variation>F</variation>
    <location>
        <position position="72"/>
    </location>
</feature>
<feature type="sequence conflict" description="In Ref. 2; CAA72785." evidence="2" ref="2">
    <original>A</original>
    <variation>P</variation>
    <location>
        <position position="75"/>
    </location>
</feature>
<feature type="sequence conflict" description="In Ref. 2." evidence="2" ref="2">
    <original>LFN</original>
    <variation>YLT</variation>
    <location>
        <begin position="98"/>
        <end position="100"/>
    </location>
</feature>
<feature type="sequence conflict" description="In Ref. 2." evidence="2" ref="2">
    <original>V</original>
    <variation>S</variation>
    <location>
        <position position="102"/>
    </location>
</feature>
<feature type="sequence conflict" description="In Ref. 2; CAA72785." evidence="2" ref="2">
    <original>R</original>
    <variation>H</variation>
    <location>
        <position position="141"/>
    </location>
</feature>
<feature type="strand" evidence="4">
    <location>
        <begin position="1"/>
        <end position="14"/>
    </location>
</feature>
<feature type="strand" evidence="4">
    <location>
        <begin position="17"/>
        <end position="26"/>
    </location>
</feature>
<feature type="strand" evidence="4">
    <location>
        <begin position="33"/>
        <end position="39"/>
    </location>
</feature>
<feature type="strand" evidence="4">
    <location>
        <begin position="48"/>
        <end position="53"/>
    </location>
</feature>
<feature type="helix" evidence="4">
    <location>
        <begin position="56"/>
        <end position="60"/>
    </location>
</feature>
<feature type="turn" evidence="4">
    <location>
        <begin position="66"/>
        <end position="70"/>
    </location>
</feature>
<feature type="helix" evidence="4">
    <location>
        <begin position="71"/>
        <end position="82"/>
    </location>
</feature>
<feature type="strand" evidence="4">
    <location>
        <begin position="84"/>
        <end position="89"/>
    </location>
</feature>
<feature type="turn" evidence="4">
    <location>
        <begin position="92"/>
        <end position="96"/>
    </location>
</feature>
<feature type="helix" evidence="4">
    <location>
        <begin position="97"/>
        <end position="110"/>
    </location>
</feature>
<feature type="helix" evidence="4">
    <location>
        <begin position="114"/>
        <end position="121"/>
    </location>
</feature>
<feature type="helix" evidence="4">
    <location>
        <begin position="131"/>
        <end position="139"/>
    </location>
</feature>
<feature type="strand" evidence="4">
    <location>
        <begin position="144"/>
        <end position="148"/>
    </location>
</feature>
<feature type="helix" evidence="4">
    <location>
        <begin position="152"/>
        <end position="158"/>
    </location>
</feature>
<feature type="turn" evidence="4">
    <location>
        <begin position="159"/>
        <end position="161"/>
    </location>
</feature>
<feature type="strand" evidence="4">
    <location>
        <begin position="162"/>
        <end position="167"/>
    </location>
</feature>
<proteinExistence type="evidence at protein level"/>
<gene>
    <name evidence="1" type="primary">ribA</name>
    <name type="ordered locus">HP_0802</name>
</gene>
<reference key="1">
    <citation type="journal article" date="1997" name="Nature">
        <title>The complete genome sequence of the gastric pathogen Helicobacter pylori.</title>
        <authorList>
            <person name="Tomb J.-F."/>
            <person name="White O."/>
            <person name="Kerlavage A.R."/>
            <person name="Clayton R.A."/>
            <person name="Sutton G.G."/>
            <person name="Fleischmann R.D."/>
            <person name="Ketchum K.A."/>
            <person name="Klenk H.-P."/>
            <person name="Gill S.R."/>
            <person name="Dougherty B.A."/>
            <person name="Nelson K.E."/>
            <person name="Quackenbush J."/>
            <person name="Zhou L."/>
            <person name="Kirkness E.F."/>
            <person name="Peterson S.N."/>
            <person name="Loftus B.J."/>
            <person name="Richardson D.L."/>
            <person name="Dodson R.J."/>
            <person name="Khalak H.G."/>
            <person name="Glodek A."/>
            <person name="McKenney K."/>
            <person name="FitzGerald L.M."/>
            <person name="Lee N."/>
            <person name="Adams M.D."/>
            <person name="Hickey E.K."/>
            <person name="Berg D.E."/>
            <person name="Gocayne J.D."/>
            <person name="Utterback T.R."/>
            <person name="Peterson J.D."/>
            <person name="Kelley J.M."/>
            <person name="Cotton M.D."/>
            <person name="Weidman J.F."/>
            <person name="Fujii C."/>
            <person name="Bowman C."/>
            <person name="Watthey L."/>
            <person name="Wallin E."/>
            <person name="Hayes W.S."/>
            <person name="Borodovsky M."/>
            <person name="Karp P.D."/>
            <person name="Smith H.O."/>
            <person name="Fraser C.M."/>
            <person name="Venter J.C."/>
        </authorList>
    </citation>
    <scope>NUCLEOTIDE SEQUENCE [LARGE SCALE GENOMIC DNA]</scope>
    <source>
        <strain>ATCC 700392 / 26695</strain>
    </source>
</reference>
<reference key="2">
    <citation type="journal article" date="1998" name="Med. Microbiol. Immunol.">
        <title>Hemolytic properties and riboflavin synthesis of Helicobacter pylori: cloning and functional characterization of the ribA gene encoding GTP-cyclohydrolase II that confers hemolytic activity to Escherichia coli.</title>
        <authorList>
            <person name="Bereswill S."/>
            <person name="Fassbinder F."/>
            <person name="Voelzing C."/>
            <person name="Covacci A."/>
            <person name="Haas R."/>
            <person name="Kist M."/>
        </authorList>
    </citation>
    <scope>NUCLEOTIDE SEQUENCE [GENOMIC DNA]</scope>
    <scope>FUNCTION</scope>
    <source>
        <strain>DSM 4867 / CCUG 17874 / NCTC 11638</strain>
    </source>
</reference>
<comment type="function">
    <text evidence="3">Catalyzes the conversion of GTP to 2,5-diamino-6-ribosylamino-4(3H)-pyrimidinone 5'-phosphate (DARP), formate and pyrophosphate.</text>
</comment>
<comment type="catalytic activity">
    <reaction evidence="1">
        <text>GTP + 4 H2O = 2,5-diamino-6-hydroxy-4-(5-phosphoribosylamino)-pyrimidine + formate + 2 phosphate + 3 H(+)</text>
        <dbReference type="Rhea" id="RHEA:23704"/>
        <dbReference type="ChEBI" id="CHEBI:15377"/>
        <dbReference type="ChEBI" id="CHEBI:15378"/>
        <dbReference type="ChEBI" id="CHEBI:15740"/>
        <dbReference type="ChEBI" id="CHEBI:37565"/>
        <dbReference type="ChEBI" id="CHEBI:43474"/>
        <dbReference type="ChEBI" id="CHEBI:58614"/>
        <dbReference type="EC" id="3.5.4.25"/>
    </reaction>
</comment>
<comment type="cofactor">
    <cofactor evidence="1">
        <name>Zn(2+)</name>
        <dbReference type="ChEBI" id="CHEBI:29105"/>
    </cofactor>
    <text evidence="1">Binds 1 zinc ion per subunit.</text>
</comment>
<comment type="pathway">
    <text evidence="1">Cofactor biosynthesis; riboflavin biosynthesis; 5-amino-6-(D-ribitylamino)uracil from GTP: step 1/4.</text>
</comment>
<comment type="similarity">
    <text evidence="1">Belongs to the GTP cyclohydrolase II family.</text>
</comment>
<sequence length="192" mass="21715">MKRLEVSNQAKLPTQFGEFYIQCFREKGSNGSKDHLVVFTPNFSQNPLVRLHSECLTGDALGSQKCDCGGALQMALERISKEGGLVIYLRQEGRGIGLFNKVNAYALQDKGYDTIQANEMIGFKDDERDYSVAGEILEYYRIKKMRLLTNNPKKIAALEKYAEVTRESLIVCANEHNQGYLEVKKLKMGHLL</sequence>
<name>RIBA_HELPY</name>
<organism>
    <name type="scientific">Helicobacter pylori (strain ATCC 700392 / 26695)</name>
    <name type="common">Campylobacter pylori</name>
    <dbReference type="NCBI Taxonomy" id="85962"/>
    <lineage>
        <taxon>Bacteria</taxon>
        <taxon>Pseudomonadati</taxon>
        <taxon>Campylobacterota</taxon>
        <taxon>Epsilonproteobacteria</taxon>
        <taxon>Campylobacterales</taxon>
        <taxon>Helicobacteraceae</taxon>
        <taxon>Helicobacter</taxon>
    </lineage>
</organism>
<protein>
    <recommendedName>
        <fullName evidence="1">GTP cyclohydrolase-2</fullName>
        <ecNumber evidence="1">3.5.4.25</ecNumber>
    </recommendedName>
    <alternativeName>
        <fullName evidence="1">GTP cyclohydrolase II</fullName>
    </alternativeName>
</protein>
<keyword id="KW-0002">3D-structure</keyword>
<keyword id="KW-0342">GTP-binding</keyword>
<keyword id="KW-0378">Hydrolase</keyword>
<keyword id="KW-0479">Metal-binding</keyword>
<keyword id="KW-0547">Nucleotide-binding</keyword>
<keyword id="KW-1185">Reference proteome</keyword>
<keyword id="KW-0686">Riboflavin biosynthesis</keyword>
<keyword id="KW-0862">Zinc</keyword>